<proteinExistence type="evidence at protein level"/>
<keyword id="KW-1003">Cell membrane</keyword>
<keyword id="KW-0963">Cytoplasm</keyword>
<keyword id="KW-0449">Lipoprotein</keyword>
<keyword id="KW-0472">Membrane</keyword>
<keyword id="KW-1210">Necrosis</keyword>
<keyword id="KW-0564">Palmitate</keyword>
<keyword id="KW-1267">Proteomics identification</keyword>
<keyword id="KW-1185">Reference proteome</keyword>
<keyword id="KW-0812">Transmembrane</keyword>
<keyword id="KW-1134">Transmembrane beta strand</keyword>
<name>GSDMC_HUMAN</name>
<accession>Q9BYG8</accession>
<accession>Q5XKF3</accession>
<accession>Q6P494</accession>
<reference key="1">
    <citation type="journal article" date="2001" name="Jpn. J. Cancer Res.">
        <title>Structure, expression and chromosome mapping of MLZE, a novel gene which is preferentially expressed in metastatic melanoma cells.</title>
        <authorList>
            <person name="Watabe K."/>
            <person name="Ito A."/>
            <person name="Asada H."/>
            <person name="Endo Y."/>
            <person name="Kobayashi T."/>
            <person name="Nakamoto K."/>
            <person name="Itami S."/>
            <person name="Takao S."/>
            <person name="Shinomura Y."/>
            <person name="Aikou T."/>
            <person name="Yoshikawa K."/>
            <person name="Matsuzawa Y."/>
            <person name="Kitamura Y."/>
            <person name="Nojima H."/>
        </authorList>
    </citation>
    <scope>NUCLEOTIDE SEQUENCE [MRNA]</scope>
    <scope>SUBCELLULAR LOCATION</scope>
    <scope>TISSUE SPECIFICITY</scope>
    <source>
        <tissue>Cervix</tissue>
    </source>
</reference>
<reference key="2">
    <citation type="journal article" date="2006" name="Nature">
        <title>DNA sequence and analysis of human chromosome 8.</title>
        <authorList>
            <person name="Nusbaum C."/>
            <person name="Mikkelsen T.S."/>
            <person name="Zody M.C."/>
            <person name="Asakawa S."/>
            <person name="Taudien S."/>
            <person name="Garber M."/>
            <person name="Kodira C.D."/>
            <person name="Schueler M.G."/>
            <person name="Shimizu A."/>
            <person name="Whittaker C.A."/>
            <person name="Chang J.L."/>
            <person name="Cuomo C.A."/>
            <person name="Dewar K."/>
            <person name="FitzGerald M.G."/>
            <person name="Yang X."/>
            <person name="Allen N.R."/>
            <person name="Anderson S."/>
            <person name="Asakawa T."/>
            <person name="Blechschmidt K."/>
            <person name="Bloom T."/>
            <person name="Borowsky M.L."/>
            <person name="Butler J."/>
            <person name="Cook A."/>
            <person name="Corum B."/>
            <person name="DeArellano K."/>
            <person name="DeCaprio D."/>
            <person name="Dooley K.T."/>
            <person name="Dorris L. III"/>
            <person name="Engels R."/>
            <person name="Gloeckner G."/>
            <person name="Hafez N."/>
            <person name="Hagopian D.S."/>
            <person name="Hall J.L."/>
            <person name="Ishikawa S.K."/>
            <person name="Jaffe D.B."/>
            <person name="Kamat A."/>
            <person name="Kudoh J."/>
            <person name="Lehmann R."/>
            <person name="Lokitsang T."/>
            <person name="Macdonald P."/>
            <person name="Major J.E."/>
            <person name="Matthews C.D."/>
            <person name="Mauceli E."/>
            <person name="Menzel U."/>
            <person name="Mihalev A.H."/>
            <person name="Minoshima S."/>
            <person name="Murayama Y."/>
            <person name="Naylor J.W."/>
            <person name="Nicol R."/>
            <person name="Nguyen C."/>
            <person name="O'Leary S.B."/>
            <person name="O'Neill K."/>
            <person name="Parker S.C.J."/>
            <person name="Polley A."/>
            <person name="Raymond C.K."/>
            <person name="Reichwald K."/>
            <person name="Rodriguez J."/>
            <person name="Sasaki T."/>
            <person name="Schilhabel M."/>
            <person name="Siddiqui R."/>
            <person name="Smith C.L."/>
            <person name="Sneddon T.P."/>
            <person name="Talamas J.A."/>
            <person name="Tenzin P."/>
            <person name="Topham K."/>
            <person name="Venkataraman V."/>
            <person name="Wen G."/>
            <person name="Yamazaki S."/>
            <person name="Young S.K."/>
            <person name="Zeng Q."/>
            <person name="Zimmer A.R."/>
            <person name="Rosenthal A."/>
            <person name="Birren B.W."/>
            <person name="Platzer M."/>
            <person name="Shimizu N."/>
            <person name="Lander E.S."/>
        </authorList>
    </citation>
    <scope>NUCLEOTIDE SEQUENCE [LARGE SCALE GENOMIC DNA]</scope>
</reference>
<reference key="3">
    <citation type="journal article" date="2004" name="Genome Res.">
        <title>The status, quality, and expansion of the NIH full-length cDNA project: the Mammalian Gene Collection (MGC).</title>
        <authorList>
            <consortium name="The MGC Project Team"/>
        </authorList>
    </citation>
    <scope>NUCLEOTIDE SEQUENCE [LARGE SCALE MRNA]</scope>
    <scope>VARIANTS SER-23 AND THR-475</scope>
    <source>
        <tissue>Skin</tissue>
    </source>
</reference>
<reference key="4">
    <citation type="journal article" date="2007" name="Genomics">
        <title>Members of a novel gene family, Gsdm, are expressed exclusively in the epithelium of the skin and gastrointestinal tract in a highly tissue-specific manner.</title>
        <authorList>
            <person name="Tamura M."/>
            <person name="Tanaka S."/>
            <person name="Fujii T."/>
            <person name="Aoki A."/>
            <person name="Komiyama H."/>
            <person name="Ezawa K."/>
            <person name="Sumiyama K."/>
            <person name="Sagai T."/>
            <person name="Shiroishi T."/>
        </authorList>
    </citation>
    <scope>IDENTIFICATION</scope>
</reference>
<reference key="5">
    <citation type="journal article" date="2009" name="Genes Chromosomes Cancer">
        <title>Distinctive expression and function of four GSDM family genes (GSDMA-D) in normal and malignant upper gastrointestinal epithelium.</title>
        <authorList>
            <person name="Saeki N."/>
            <person name="Usui T."/>
            <person name="Aoyagi K."/>
            <person name="Kim D.H."/>
            <person name="Sato M."/>
            <person name="Mabuchi T."/>
            <person name="Yanagihara K."/>
            <person name="Ogawa K."/>
            <person name="Sakamoto H."/>
            <person name="Yoshida T."/>
            <person name="Sasaki H."/>
        </authorList>
    </citation>
    <scope>TISSUE SPECIFICITY</scope>
</reference>
<reference key="6">
    <citation type="journal article" date="2016" name="Nature">
        <title>Pore-forming activity and structural autoinhibition of the gasdermin family.</title>
        <authorList>
            <person name="Ding J."/>
            <person name="Wang K."/>
            <person name="Liu W."/>
            <person name="She Y."/>
            <person name="Sun Q."/>
            <person name="Shi J."/>
            <person name="Sun H."/>
            <person name="Wang D.C."/>
            <person name="Shao F."/>
        </authorList>
    </citation>
    <scope>FUNCTION</scope>
    <scope>MUTAGENESIS OF LEU-319; TYR-398 AND ALA-402</scope>
</reference>
<reference key="7">
    <citation type="journal article" date="2020" name="Nat. Cell Biol.">
        <title>PD-L1-mediated gasdermin C expression switches apoptosis to pyroptosis in cancer cells and facilitates tumour necrosis.</title>
        <authorList>
            <person name="Hou J."/>
            <person name="Zhao R."/>
            <person name="Xia W."/>
            <person name="Chang C.W."/>
            <person name="You Y."/>
            <person name="Hsu J.M."/>
            <person name="Nie L."/>
            <person name="Chen Y."/>
            <person name="Wang Y.C."/>
            <person name="Liu C."/>
            <person name="Wang W.J."/>
            <person name="Wu Y."/>
            <person name="Ke B."/>
            <person name="Hsu J.L."/>
            <person name="Huang K."/>
            <person name="Ye Z."/>
            <person name="Yang Y."/>
            <person name="Xia X."/>
            <person name="Li Y."/>
            <person name="Li C.W."/>
            <person name="Shao B."/>
            <person name="Tainer J.A."/>
            <person name="Hung M.C."/>
        </authorList>
    </citation>
    <scope>FUNCTION</scope>
    <scope>ACTIVITY REGULATION</scope>
    <scope>SUBCELLULAR LOCATION</scope>
    <scope>PROTEOLYTIC CLEAVAGE</scope>
    <scope>INDUCTION</scope>
    <scope>MUTAGENESIS OF ASP-365</scope>
</reference>
<reference key="8">
    <citation type="journal article" date="2021" name="Cell Res.">
        <title>The metabolite alpha-KG induces GSDMC-dependent pyroptosis through death receptor 6-activated caspase-8.</title>
        <authorList>
            <person name="Zhang J.Y."/>
            <person name="Zhou B."/>
            <person name="Sun R.Y."/>
            <person name="Ai Y.L."/>
            <person name="Cheng K."/>
            <person name="Li F.N."/>
            <person name="Wang B.R."/>
            <person name="Liu F.J."/>
            <person name="Jiang Z.H."/>
            <person name="Wang W.J."/>
            <person name="Zhou D."/>
            <person name="Chen H.Z."/>
            <person name="Wu Q."/>
        </authorList>
    </citation>
    <scope>FUNCTION</scope>
    <scope>ACTIVITY REGULATION</scope>
    <scope>PROTEOLYTIC CLEAVAGE</scope>
    <scope>MUTAGENESIS OF 231-ASP-ASP-232; ASP-233; ASP-240 AND ASP-276</scope>
</reference>
<reference key="9">
    <citation type="journal article" date="2024" name="Nature">
        <title>ROS-dependent S-palmitoylation activates cleaved and intact gasdermin D.</title>
        <authorList>
            <person name="Du G."/>
            <person name="Healy L.B."/>
            <person name="David L."/>
            <person name="Walker C."/>
            <person name="El-Baba T.J."/>
            <person name="Lutomski C.A."/>
            <person name="Goh B."/>
            <person name="Gu B."/>
            <person name="Pi X."/>
            <person name="Devant P."/>
            <person name="Fontana P."/>
            <person name="Dong Y."/>
            <person name="Ma X."/>
            <person name="Miao R."/>
            <person name="Balasubramanian A."/>
            <person name="Puthenveetil R."/>
            <person name="Banerjee A."/>
            <person name="Luo H.R."/>
            <person name="Kagan J.C."/>
            <person name="Oh S.F."/>
            <person name="Robinson C.V."/>
            <person name="Lieberman J."/>
            <person name="Wu H."/>
        </authorList>
    </citation>
    <scope>PALMITOYLATION</scope>
</reference>
<protein>
    <recommendedName>
        <fullName evidence="10">Gasdermin-C</fullName>
    </recommendedName>
    <alternativeName>
        <fullName evidence="9">Melanoma-derived leucine zipper-containing extranuclear factor</fullName>
    </alternativeName>
    <component>
        <recommendedName>
            <fullName evidence="11">Gasdermin-C, N-terminal</fullName>
            <shortName evidence="11">GSDMC-NT</shortName>
        </recommendedName>
    </component>
    <component>
        <recommendedName>
            <fullName evidence="11">Gasdermin-C, C-terminal</fullName>
            <shortName evidence="11">GSDMC-CT</shortName>
        </recommendedName>
    </component>
</protein>
<evidence type="ECO:0000250" key="1">
    <source>
        <dbReference type="UniProtKB" id="Q5Y4Y6"/>
    </source>
</evidence>
<evidence type="ECO:0000269" key="2">
    <source>
    </source>
</evidence>
<evidence type="ECO:0000269" key="3">
    <source>
    </source>
</evidence>
<evidence type="ECO:0000269" key="4">
    <source>
    </source>
</evidence>
<evidence type="ECO:0000269" key="5">
    <source>
    </source>
</evidence>
<evidence type="ECO:0000269" key="6">
    <source>
    </source>
</evidence>
<evidence type="ECO:0000269" key="7">
    <source>
    </source>
</evidence>
<evidence type="ECO:0000269" key="8">
    <source>
    </source>
</evidence>
<evidence type="ECO:0000303" key="9">
    <source>
    </source>
</evidence>
<evidence type="ECO:0000303" key="10">
    <source>
    </source>
</evidence>
<evidence type="ECO:0000305" key="11"/>
<evidence type="ECO:0000305" key="12">
    <source>
    </source>
</evidence>
<evidence type="ECO:0000305" key="13">
    <source>
    </source>
</evidence>
<evidence type="ECO:0000312" key="14">
    <source>
        <dbReference type="HGNC" id="HGNC:7151"/>
    </source>
</evidence>
<sequence>MPSMLERISKNLVKEIGSKDLTPVKYLLSATKLRQFVILRKKKDSRSSFWEQSDYVPVEFSLNDILEPSSSVLETVVTGPFHFSDIMIQKHKADMGVNVGIEVSVSGEASVDHGCSLEFQIVTIPSPNLEDFQKRKLLDPEPSFLKECRRRGDNLYVVTEAVELINNTVLYDSSSVNILGKIALWITYGKGQGQGESLRVKKKALTLQKGMVMAYKRKQLVIKEKAILISDDDEQRTFQDEYEISEMVGYCAARSEGLLPSFHTISPTLFNASSNDMKLKPELFLTQQFLSGHLPKYEQVHILPVGRIEEPFWQNFKHLQEEVFQKIKTLAQLSKDVQDVMFYSILAMLRDRGALQDLMNMLELDSSGHLDGPGGAILKKLQQDSNHAWFNPKDPILYLLEAIMVLSDFQHDLLACSMEKRILLQQQELVRSILEPNFRYPWSIPFTLKPELLAPLQSEGLAITYGLLEECGLRMELDNPRSTWDVEAKMPLSALYGTLSLLQQLAEA</sequence>
<feature type="chain" id="PRO_0000148180" description="Gasdermin-C">
    <location>
        <begin position="1"/>
        <end position="508"/>
    </location>
</feature>
<feature type="chain" id="PRO_0000451674" description="Gasdermin-C, N-terminal" evidence="13">
    <location>
        <begin position="1"/>
        <end position="240"/>
    </location>
</feature>
<feature type="chain" id="PRO_0000451675" description="Gasdermin-C, C-terminal" evidence="13">
    <location>
        <begin position="241"/>
        <end position="508"/>
    </location>
</feature>
<feature type="region of interest" description="Triggers pyroptosis" evidence="5">
    <location>
        <begin position="1"/>
        <end position="257"/>
    </location>
</feature>
<feature type="site" description="Cleavage; by CASP8" evidence="7">
    <location>
        <begin position="240"/>
        <end position="241"/>
    </location>
</feature>
<feature type="site" description="Cleavage; by CASP8" evidence="12">
    <location>
        <begin position="365"/>
        <end position="366"/>
    </location>
</feature>
<feature type="sequence variant" id="VAR_028138" description="In dbSNP:rs10090835." evidence="3">
    <original>P</original>
    <variation>S</variation>
    <location>
        <position position="23"/>
    </location>
</feature>
<feature type="sequence variant" id="VAR_028139" description="In dbSNP:rs16904151.">
    <original>R</original>
    <variation>K</variation>
    <location>
        <position position="150"/>
    </location>
</feature>
<feature type="sequence variant" id="VAR_028140" description="In dbSNP:rs4144738." evidence="3">
    <original>M</original>
    <variation>T</variation>
    <location>
        <position position="475"/>
    </location>
</feature>
<feature type="mutagenesis site" description="Does not affect cleavage by CASP8 in response to alpha-ketoglutarate." evidence="7">
    <original>DD</original>
    <variation>AA</variation>
    <location>
        <begin position="231"/>
        <end position="232"/>
    </location>
</feature>
<feature type="mutagenesis site" description="Does not affect cleavage by CASP8 in response to alpha-ketoglutarate." evidence="7">
    <original>D</original>
    <variation>A</variation>
    <location>
        <position position="233"/>
    </location>
</feature>
<feature type="mutagenesis site" description="Impaired cleavage by CASP8 in response to alpha-ketoglutarate." evidence="7">
    <original>D</original>
    <variation>A</variation>
    <location>
        <position position="240"/>
    </location>
</feature>
<feature type="mutagenesis site" description="Does not affect cleavage by CASP8 in response to alpha-ketoglutarate." evidence="7">
    <original>D</original>
    <variation>A</variation>
    <location>
        <position position="276"/>
    </location>
</feature>
<feature type="mutagenesis site" description="Low spontaneous pyroptosis-inducing activity." evidence="5">
    <original>L</original>
    <variation>D</variation>
    <location>
        <position position="319"/>
    </location>
</feature>
<feature type="mutagenesis site" description="Abolished cleavage by CASP8." evidence="6">
    <original>D</original>
    <variation>A</variation>
    <location>
        <position position="365"/>
    </location>
</feature>
<feature type="mutagenesis site" description="Low spontaneous pyroptosis-inducing activity." evidence="5">
    <original>Y</original>
    <variation>D</variation>
    <location>
        <position position="398"/>
    </location>
</feature>
<feature type="mutagenesis site" description="Spontaneous pyroptosis-inducing activity." evidence="5">
    <original>A</original>
    <variation>D</variation>
    <location>
        <position position="402"/>
    </location>
</feature>
<comment type="function">
    <molecule>Gasdermin-C</molecule>
    <text evidence="6 7">This form constitutes the precursor of the pore-forming protein: upon cleavage, the released N-terminal moiety (Gasdermin-C, N-terminal) binds to membranes and forms pores, triggering pyroptosis.</text>
</comment>
<comment type="function">
    <molecule>Gasdermin-C, N-terminal</molecule>
    <text evidence="5 6 7">Pore-forming protein that causes membrane permeabilization and pyroptosis (PubMed:27281216, PubMed:32929201, PubMed:34012073). Produced by the cleavage of gasdermin-C by caspase CASP8 in response to death signals (PubMed:32929201, PubMed:34012073). After cleavage, moves to the plasma membrane where it strongly binds to membrane inner leaflet lipids (PubMed:32929201, PubMed:34012073). Homooligomerizes within the membrane and forms pores of 10-15 nanometers (nm) of inner diameter, triggering pyroptosis (PubMed:32929201, PubMed:34012073).</text>
</comment>
<comment type="activity regulation">
    <molecule>Gasdermin-C</molecule>
    <text evidence="6 7">The full-length protein before cleavage is inactive: intramolecular interactions between N- and C-terminal domains mediate autoinhibition in the absence of activation signal (PubMed:32929201, PubMed:34012073). The intrinsic pyroptosis-inducing activity is carried by the released N-terminal moiety (Gasdermin-C, N-terminal) following cleavage by caspase CASP8 (PubMed:32929201, PubMed:34012073).</text>
</comment>
<comment type="subunit">
    <molecule>Gasdermin-C, N-terminal</molecule>
    <text evidence="1">Homooligomer; homooligomeric ring-shaped pore complex containing 27-28 subunits when inserted in the membrane.</text>
</comment>
<comment type="subcellular location">
    <molecule>Gasdermin-C</molecule>
    <subcellularLocation>
        <location evidence="2">Cytoplasm</location>
        <location evidence="2">Cytosol</location>
    </subcellularLocation>
</comment>
<comment type="subcellular location">
    <molecule>Gasdermin-C, N-terminal</molecule>
    <subcellularLocation>
        <location evidence="6">Cell membrane</location>
        <topology evidence="1">Multi-pass membrane protein</topology>
    </subcellularLocation>
</comment>
<comment type="tissue specificity">
    <text evidence="2 4">Expressed mainly in trachea and spleen (PubMed:11223543). In the esophagus, expressed in differentiating cells and probably in differentiated cells. Also detected in gastric epithelium (PubMed:19051310).</text>
</comment>
<comment type="induction">
    <text evidence="6">Expression in induced by STAT3 and CD274/PD-L1 in response to hypoxia.</text>
</comment>
<comment type="domain">
    <text evidence="1">Intramolecular interactions between N- and C-terminal domains are important for autoinhibition in the absence of activation signal (By similarity). The intrinsic pyroptosis-inducing activity is carried by the N-terminal domain (By similarity).</text>
</comment>
<comment type="PTM">
    <text evidence="6 7">Cleavage by CASP8 relieves autoinhibition by releasing the N-terminal moiety (Gasdermin-C, N-terminal) that initiates pyroptosis (PubMed:32929201, PubMed:34012073). The cleavage site is unclear (PubMed:32929201, PubMed:34012073). According to a publication, it takes place after Asp-240 in response to alpha-ketoglutarate (PubMed:34012073). Another paper reports cleavage by CASP8 after Asp-365 (PubMed:32929201).</text>
</comment>
<comment type="PTM">
    <text evidence="8">Palmitoylated.</text>
</comment>
<comment type="similarity">
    <text evidence="11">Belongs to the gasdermin family.</text>
</comment>
<organism>
    <name type="scientific">Homo sapiens</name>
    <name type="common">Human</name>
    <dbReference type="NCBI Taxonomy" id="9606"/>
    <lineage>
        <taxon>Eukaryota</taxon>
        <taxon>Metazoa</taxon>
        <taxon>Chordata</taxon>
        <taxon>Craniata</taxon>
        <taxon>Vertebrata</taxon>
        <taxon>Euteleostomi</taxon>
        <taxon>Mammalia</taxon>
        <taxon>Eutheria</taxon>
        <taxon>Euarchontoglires</taxon>
        <taxon>Primates</taxon>
        <taxon>Haplorrhini</taxon>
        <taxon>Catarrhini</taxon>
        <taxon>Hominidae</taxon>
        <taxon>Homo</taxon>
    </lineage>
</organism>
<dbReference type="EMBL" id="AB042405">
    <property type="protein sequence ID" value="BAB40331.1"/>
    <property type="molecule type" value="mRNA"/>
</dbReference>
<dbReference type="EMBL" id="AC022849">
    <property type="status" value="NOT_ANNOTATED_CDS"/>
    <property type="molecule type" value="Genomic_DNA"/>
</dbReference>
<dbReference type="EMBL" id="BC035321">
    <property type="protein sequence ID" value="AAH35321.1"/>
    <property type="molecule type" value="mRNA"/>
</dbReference>
<dbReference type="EMBL" id="BC063595">
    <property type="protein sequence ID" value="AAH63595.1"/>
    <property type="molecule type" value="mRNA"/>
</dbReference>
<dbReference type="CCDS" id="CCDS6360.1"/>
<dbReference type="RefSeq" id="NP_113603.1">
    <property type="nucleotide sequence ID" value="NM_031415.3"/>
</dbReference>
<dbReference type="SMR" id="Q9BYG8"/>
<dbReference type="BioGRID" id="121101">
    <property type="interactions" value="6"/>
</dbReference>
<dbReference type="FunCoup" id="Q9BYG8">
    <property type="interactions" value="188"/>
</dbReference>
<dbReference type="IntAct" id="Q9BYG8">
    <property type="interactions" value="4"/>
</dbReference>
<dbReference type="STRING" id="9606.ENSP00000276708"/>
<dbReference type="TCDB" id="1.C.123.1.4">
    <property type="family name" value="the pore-forming gasdermin (gasdermin) family"/>
</dbReference>
<dbReference type="GlyGen" id="Q9BYG8">
    <property type="glycosylation" value="1 site, 1 O-linked glycan (1 site)"/>
</dbReference>
<dbReference type="iPTMnet" id="Q9BYG8"/>
<dbReference type="PhosphoSitePlus" id="Q9BYG8"/>
<dbReference type="BioMuta" id="GSDMC"/>
<dbReference type="DMDM" id="311033444"/>
<dbReference type="MassIVE" id="Q9BYG8"/>
<dbReference type="PaxDb" id="9606-ENSP00000276708"/>
<dbReference type="PeptideAtlas" id="Q9BYG8"/>
<dbReference type="ProteomicsDB" id="79642"/>
<dbReference type="Antibodypedia" id="14017">
    <property type="antibodies" value="162 antibodies from 28 providers"/>
</dbReference>
<dbReference type="DNASU" id="56169"/>
<dbReference type="Ensembl" id="ENST00000276708.9">
    <property type="protein sequence ID" value="ENSP00000276708.4"/>
    <property type="gene ID" value="ENSG00000147697.10"/>
</dbReference>
<dbReference type="GeneID" id="56169"/>
<dbReference type="KEGG" id="hsa:56169"/>
<dbReference type="MANE-Select" id="ENST00000276708.9">
    <property type="protein sequence ID" value="ENSP00000276708.4"/>
    <property type="RefSeq nucleotide sequence ID" value="NM_031415.3"/>
    <property type="RefSeq protein sequence ID" value="NP_113603.1"/>
</dbReference>
<dbReference type="UCSC" id="uc003ysr.3">
    <property type="organism name" value="human"/>
</dbReference>
<dbReference type="AGR" id="HGNC:7151"/>
<dbReference type="CTD" id="56169"/>
<dbReference type="DisGeNET" id="56169"/>
<dbReference type="GeneCards" id="GSDMC"/>
<dbReference type="HGNC" id="HGNC:7151">
    <property type="gene designation" value="GSDMC"/>
</dbReference>
<dbReference type="HPA" id="ENSG00000147697">
    <property type="expression patterns" value="Tissue enhanced (esophagus, lymphoid tissue, skin, vagina)"/>
</dbReference>
<dbReference type="MIM" id="608384">
    <property type="type" value="gene"/>
</dbReference>
<dbReference type="neXtProt" id="NX_Q9BYG8"/>
<dbReference type="OpenTargets" id="ENSG00000147697"/>
<dbReference type="PharmGKB" id="PA162390324"/>
<dbReference type="VEuPathDB" id="HostDB:ENSG00000147697"/>
<dbReference type="eggNOG" id="ENOG502S0IQ">
    <property type="taxonomic scope" value="Eukaryota"/>
</dbReference>
<dbReference type="GeneTree" id="ENSGT00950000183140"/>
<dbReference type="HOGENOM" id="CLU_040752_2_0_1"/>
<dbReference type="InParanoid" id="Q9BYG8"/>
<dbReference type="OMA" id="ISLWITY"/>
<dbReference type="OrthoDB" id="9836623at2759"/>
<dbReference type="PAN-GO" id="Q9BYG8">
    <property type="GO annotations" value="5 GO annotations based on evolutionary models"/>
</dbReference>
<dbReference type="PhylomeDB" id="Q9BYG8"/>
<dbReference type="TreeFam" id="TF331886"/>
<dbReference type="PathwayCommons" id="Q9BYG8"/>
<dbReference type="BioGRID-ORCS" id="56169">
    <property type="hits" value="19 hits in 1145 CRISPR screens"/>
</dbReference>
<dbReference type="ChiTaRS" id="GSDMC">
    <property type="organism name" value="human"/>
</dbReference>
<dbReference type="GenomeRNAi" id="56169"/>
<dbReference type="Pharos" id="Q9BYG8">
    <property type="development level" value="Tbio"/>
</dbReference>
<dbReference type="PRO" id="PR:Q9BYG8"/>
<dbReference type="Proteomes" id="UP000005640">
    <property type="component" value="Chromosome 8"/>
</dbReference>
<dbReference type="RNAct" id="Q9BYG8">
    <property type="molecule type" value="protein"/>
</dbReference>
<dbReference type="Bgee" id="ENSG00000147697">
    <property type="expression patterns" value="Expressed in lower esophagus mucosa and 88 other cell types or tissues"/>
</dbReference>
<dbReference type="GO" id="GO:0005737">
    <property type="term" value="C:cytoplasm"/>
    <property type="evidence" value="ECO:0000314"/>
    <property type="project" value="UniProtKB"/>
</dbReference>
<dbReference type="GO" id="GO:0005829">
    <property type="term" value="C:cytosol"/>
    <property type="evidence" value="ECO:0007669"/>
    <property type="project" value="UniProtKB-SubCell"/>
</dbReference>
<dbReference type="GO" id="GO:0005886">
    <property type="term" value="C:plasma membrane"/>
    <property type="evidence" value="ECO:0007669"/>
    <property type="project" value="UniProtKB-SubCell"/>
</dbReference>
<dbReference type="GO" id="GO:0005546">
    <property type="term" value="F:phosphatidylinositol-4,5-bisphosphate binding"/>
    <property type="evidence" value="ECO:0000318"/>
    <property type="project" value="GO_Central"/>
</dbReference>
<dbReference type="GO" id="GO:0070273">
    <property type="term" value="F:phosphatidylinositol-4-phosphate binding"/>
    <property type="evidence" value="ECO:0000318"/>
    <property type="project" value="GO_Central"/>
</dbReference>
<dbReference type="GO" id="GO:0001786">
    <property type="term" value="F:phosphatidylserine binding"/>
    <property type="evidence" value="ECO:0000318"/>
    <property type="project" value="GO_Central"/>
</dbReference>
<dbReference type="GO" id="GO:0042742">
    <property type="term" value="P:defense response to bacterium"/>
    <property type="evidence" value="ECO:0000318"/>
    <property type="project" value="GO_Central"/>
</dbReference>
<dbReference type="GO" id="GO:0012501">
    <property type="term" value="P:programmed cell death"/>
    <property type="evidence" value="ECO:0007669"/>
    <property type="project" value="UniProtKB-KW"/>
</dbReference>
<dbReference type="GO" id="GO:0070269">
    <property type="term" value="P:pyroptotic inflammatory response"/>
    <property type="evidence" value="ECO:0000318"/>
    <property type="project" value="GO_Central"/>
</dbReference>
<dbReference type="InterPro" id="IPR007677">
    <property type="entry name" value="Gasdermin"/>
</dbReference>
<dbReference type="InterPro" id="IPR040460">
    <property type="entry name" value="Gasdermin_pore"/>
</dbReference>
<dbReference type="InterPro" id="IPR041263">
    <property type="entry name" value="Gasdermin_PUB"/>
</dbReference>
<dbReference type="PANTHER" id="PTHR16399">
    <property type="entry name" value="GASDERMIN"/>
    <property type="match status" value="1"/>
</dbReference>
<dbReference type="PANTHER" id="PTHR16399:SF21">
    <property type="entry name" value="GASDERMIN-C"/>
    <property type="match status" value="1"/>
</dbReference>
<dbReference type="Pfam" id="PF04598">
    <property type="entry name" value="Gasdermin"/>
    <property type="match status" value="1"/>
</dbReference>
<dbReference type="Pfam" id="PF17708">
    <property type="entry name" value="Gasdermin_C"/>
    <property type="match status" value="1"/>
</dbReference>
<gene>
    <name evidence="10 14" type="primary">GSDMC</name>
    <name evidence="9" type="synonym">MLZE</name>
</gene>